<name>RS9_RHIE6</name>
<keyword id="KW-0687">Ribonucleoprotein</keyword>
<keyword id="KW-0689">Ribosomal protein</keyword>
<comment type="similarity">
    <text evidence="1">Belongs to the universal ribosomal protein uS9 family.</text>
</comment>
<feature type="chain" id="PRO_1000128159" description="Small ribosomal subunit protein uS9">
    <location>
        <begin position="1"/>
        <end position="155"/>
    </location>
</feature>
<gene>
    <name evidence="1" type="primary">rpsI</name>
    <name type="ordered locus">RHECIAT_CH0001638</name>
</gene>
<evidence type="ECO:0000255" key="1">
    <source>
        <dbReference type="HAMAP-Rule" id="MF_00532"/>
    </source>
</evidence>
<evidence type="ECO:0000305" key="2"/>
<proteinExistence type="inferred from homology"/>
<reference key="1">
    <citation type="journal article" date="2010" name="Appl. Environ. Microbiol.">
        <title>Conserved symbiotic plasmid DNA sequences in the multireplicon pangenomic structure of Rhizobium etli.</title>
        <authorList>
            <person name="Gonzalez V."/>
            <person name="Acosta J.L."/>
            <person name="Santamaria R.I."/>
            <person name="Bustos P."/>
            <person name="Fernandez J.L."/>
            <person name="Hernandez Gonzalez I.L."/>
            <person name="Diaz R."/>
            <person name="Flores M."/>
            <person name="Palacios R."/>
            <person name="Mora J."/>
            <person name="Davila G."/>
        </authorList>
    </citation>
    <scope>NUCLEOTIDE SEQUENCE [LARGE SCALE GENOMIC DNA]</scope>
    <source>
        <strain>CIAT 652</strain>
    </source>
</reference>
<accession>B3PVW3</accession>
<sequence length="155" mass="16690">MADLSSLKDLGTASEAAAPAHVRKVDSLGRSYATGKRKNAVARVWVKPGSGKIIVNGKEFADYFARPVLQMILRQPIVAAARDGQFDIVATVAGGGLSGQAGAVRHGLSKALTYFEPGLRSVLKKGGFLTRDSRVVERKKYGKAKARRSFQFSKR</sequence>
<dbReference type="EMBL" id="CP001074">
    <property type="protein sequence ID" value="ACE90615.1"/>
    <property type="molecule type" value="Genomic_DNA"/>
</dbReference>
<dbReference type="SMR" id="B3PVW3"/>
<dbReference type="KEGG" id="rec:RHECIAT_CH0001638"/>
<dbReference type="eggNOG" id="COG0103">
    <property type="taxonomic scope" value="Bacteria"/>
</dbReference>
<dbReference type="HOGENOM" id="CLU_046483_2_0_5"/>
<dbReference type="Proteomes" id="UP000008817">
    <property type="component" value="Chromosome"/>
</dbReference>
<dbReference type="GO" id="GO:0022627">
    <property type="term" value="C:cytosolic small ribosomal subunit"/>
    <property type="evidence" value="ECO:0007669"/>
    <property type="project" value="TreeGrafter"/>
</dbReference>
<dbReference type="GO" id="GO:0003723">
    <property type="term" value="F:RNA binding"/>
    <property type="evidence" value="ECO:0007669"/>
    <property type="project" value="TreeGrafter"/>
</dbReference>
<dbReference type="GO" id="GO:0003735">
    <property type="term" value="F:structural constituent of ribosome"/>
    <property type="evidence" value="ECO:0007669"/>
    <property type="project" value="InterPro"/>
</dbReference>
<dbReference type="GO" id="GO:0006412">
    <property type="term" value="P:translation"/>
    <property type="evidence" value="ECO:0007669"/>
    <property type="project" value="UniProtKB-UniRule"/>
</dbReference>
<dbReference type="FunFam" id="3.30.230.10:FF:000001">
    <property type="entry name" value="30S ribosomal protein S9"/>
    <property type="match status" value="1"/>
</dbReference>
<dbReference type="Gene3D" id="3.30.230.10">
    <property type="match status" value="1"/>
</dbReference>
<dbReference type="HAMAP" id="MF_00532_B">
    <property type="entry name" value="Ribosomal_uS9_B"/>
    <property type="match status" value="1"/>
</dbReference>
<dbReference type="InterPro" id="IPR020568">
    <property type="entry name" value="Ribosomal_Su5_D2-typ_SF"/>
</dbReference>
<dbReference type="InterPro" id="IPR000754">
    <property type="entry name" value="Ribosomal_uS9"/>
</dbReference>
<dbReference type="InterPro" id="IPR023035">
    <property type="entry name" value="Ribosomal_uS9_bac/plastid"/>
</dbReference>
<dbReference type="InterPro" id="IPR020574">
    <property type="entry name" value="Ribosomal_uS9_CS"/>
</dbReference>
<dbReference type="InterPro" id="IPR014721">
    <property type="entry name" value="Ribsml_uS5_D2-typ_fold_subgr"/>
</dbReference>
<dbReference type="NCBIfam" id="NF001099">
    <property type="entry name" value="PRK00132.1"/>
    <property type="match status" value="1"/>
</dbReference>
<dbReference type="PANTHER" id="PTHR21569">
    <property type="entry name" value="RIBOSOMAL PROTEIN S9"/>
    <property type="match status" value="1"/>
</dbReference>
<dbReference type="PANTHER" id="PTHR21569:SF1">
    <property type="entry name" value="SMALL RIBOSOMAL SUBUNIT PROTEIN US9M"/>
    <property type="match status" value="1"/>
</dbReference>
<dbReference type="Pfam" id="PF00380">
    <property type="entry name" value="Ribosomal_S9"/>
    <property type="match status" value="1"/>
</dbReference>
<dbReference type="SUPFAM" id="SSF54211">
    <property type="entry name" value="Ribosomal protein S5 domain 2-like"/>
    <property type="match status" value="1"/>
</dbReference>
<dbReference type="PROSITE" id="PS00360">
    <property type="entry name" value="RIBOSOMAL_S9"/>
    <property type="match status" value="1"/>
</dbReference>
<protein>
    <recommendedName>
        <fullName evidence="1">Small ribosomal subunit protein uS9</fullName>
    </recommendedName>
    <alternativeName>
        <fullName evidence="2">30S ribosomal protein S9</fullName>
    </alternativeName>
</protein>
<organism>
    <name type="scientific">Rhizobium etli (strain CIAT 652)</name>
    <dbReference type="NCBI Taxonomy" id="491916"/>
    <lineage>
        <taxon>Bacteria</taxon>
        <taxon>Pseudomonadati</taxon>
        <taxon>Pseudomonadota</taxon>
        <taxon>Alphaproteobacteria</taxon>
        <taxon>Hyphomicrobiales</taxon>
        <taxon>Rhizobiaceae</taxon>
        <taxon>Rhizobium/Agrobacterium group</taxon>
        <taxon>Rhizobium</taxon>
    </lineage>
</organism>